<feature type="signal peptide" evidence="2">
    <location>
        <begin position="1"/>
        <end position="17"/>
    </location>
</feature>
<feature type="chain" id="PRO_0000394589" description="Probable pectate lyase F">
    <location>
        <begin position="18"/>
        <end position="234"/>
    </location>
</feature>
<keyword id="KW-0106">Calcium</keyword>
<keyword id="KW-0119">Carbohydrate metabolism</keyword>
<keyword id="KW-0961">Cell wall biogenesis/degradation</keyword>
<keyword id="KW-0456">Lyase</keyword>
<keyword id="KW-0624">Polysaccharide degradation</keyword>
<keyword id="KW-1185">Reference proteome</keyword>
<keyword id="KW-0964">Secreted</keyword>
<keyword id="KW-0732">Signal</keyword>
<gene>
    <name type="primary">plyF</name>
    <name type="ORF">AFUA_1G01120</name>
</gene>
<name>PLYF_ASPFU</name>
<protein>
    <recommendedName>
        <fullName>Probable pectate lyase F</fullName>
        <ecNumber>4.2.2.2</ecNumber>
    </recommendedName>
</protein>
<evidence type="ECO:0000250" key="1"/>
<evidence type="ECO:0000255" key="2"/>
<evidence type="ECO:0000305" key="3"/>
<organism>
    <name type="scientific">Aspergillus fumigatus (strain ATCC MYA-4609 / CBS 101355 / FGSC A1100 / Af293)</name>
    <name type="common">Neosartorya fumigata</name>
    <dbReference type="NCBI Taxonomy" id="330879"/>
    <lineage>
        <taxon>Eukaryota</taxon>
        <taxon>Fungi</taxon>
        <taxon>Dikarya</taxon>
        <taxon>Ascomycota</taxon>
        <taxon>Pezizomycotina</taxon>
        <taxon>Eurotiomycetes</taxon>
        <taxon>Eurotiomycetidae</taxon>
        <taxon>Eurotiales</taxon>
        <taxon>Aspergillaceae</taxon>
        <taxon>Aspergillus</taxon>
        <taxon>Aspergillus subgen. Fumigati</taxon>
    </lineage>
</organism>
<sequence length="234" mass="24744">MWSSIAAFPVLVPVALACLGYEGGVPTPTAHHSNSAVIEVAAGQVFDAGWAKYDRGSGACKGQSEGDWKDAVFYLHSGATLKNVIIGANQAEGVHCDGPCTLQFVWFEDVCEDAITIKNDKAGQETWIIGGGAYHASDKIVQHNGCGTVNIINFYAEDYGKVPRSCGNCDKQCKRNVYVEGTTARNGGEVVGINLNYGDTATLKNVCADSAHPCVFYDGCAGDCEPKKVGYCSG</sequence>
<reference key="1">
    <citation type="journal article" date="2005" name="Nature">
        <title>Genomic sequence of the pathogenic and allergenic filamentous fungus Aspergillus fumigatus.</title>
        <authorList>
            <person name="Nierman W.C."/>
            <person name="Pain A."/>
            <person name="Anderson M.J."/>
            <person name="Wortman J.R."/>
            <person name="Kim H.S."/>
            <person name="Arroyo J."/>
            <person name="Berriman M."/>
            <person name="Abe K."/>
            <person name="Archer D.B."/>
            <person name="Bermejo C."/>
            <person name="Bennett J.W."/>
            <person name="Bowyer P."/>
            <person name="Chen D."/>
            <person name="Collins M."/>
            <person name="Coulsen R."/>
            <person name="Davies R."/>
            <person name="Dyer P.S."/>
            <person name="Farman M.L."/>
            <person name="Fedorova N."/>
            <person name="Fedorova N.D."/>
            <person name="Feldblyum T.V."/>
            <person name="Fischer R."/>
            <person name="Fosker N."/>
            <person name="Fraser A."/>
            <person name="Garcia J.L."/>
            <person name="Garcia M.J."/>
            <person name="Goble A."/>
            <person name="Goldman G.H."/>
            <person name="Gomi K."/>
            <person name="Griffith-Jones S."/>
            <person name="Gwilliam R."/>
            <person name="Haas B.J."/>
            <person name="Haas H."/>
            <person name="Harris D.E."/>
            <person name="Horiuchi H."/>
            <person name="Huang J."/>
            <person name="Humphray S."/>
            <person name="Jimenez J."/>
            <person name="Keller N."/>
            <person name="Khouri H."/>
            <person name="Kitamoto K."/>
            <person name="Kobayashi T."/>
            <person name="Konzack S."/>
            <person name="Kulkarni R."/>
            <person name="Kumagai T."/>
            <person name="Lafton A."/>
            <person name="Latge J.-P."/>
            <person name="Li W."/>
            <person name="Lord A."/>
            <person name="Lu C."/>
            <person name="Majoros W.H."/>
            <person name="May G.S."/>
            <person name="Miller B.L."/>
            <person name="Mohamoud Y."/>
            <person name="Molina M."/>
            <person name="Monod M."/>
            <person name="Mouyna I."/>
            <person name="Mulligan S."/>
            <person name="Murphy L.D."/>
            <person name="O'Neil S."/>
            <person name="Paulsen I."/>
            <person name="Penalva M.A."/>
            <person name="Pertea M."/>
            <person name="Price C."/>
            <person name="Pritchard B.L."/>
            <person name="Quail M.A."/>
            <person name="Rabbinowitsch E."/>
            <person name="Rawlins N."/>
            <person name="Rajandream M.A."/>
            <person name="Reichard U."/>
            <person name="Renauld H."/>
            <person name="Robson G.D."/>
            <person name="Rodriguez de Cordoba S."/>
            <person name="Rodriguez-Pena J.M."/>
            <person name="Ronning C.M."/>
            <person name="Rutter S."/>
            <person name="Salzberg S.L."/>
            <person name="Sanchez M."/>
            <person name="Sanchez-Ferrero J.C."/>
            <person name="Saunders D."/>
            <person name="Seeger K."/>
            <person name="Squares R."/>
            <person name="Squares S."/>
            <person name="Takeuchi M."/>
            <person name="Tekaia F."/>
            <person name="Turner G."/>
            <person name="Vazquez de Aldana C.R."/>
            <person name="Weidman J."/>
            <person name="White O."/>
            <person name="Woodward J.R."/>
            <person name="Yu J.-H."/>
            <person name="Fraser C.M."/>
            <person name="Galagan J.E."/>
            <person name="Asai K."/>
            <person name="Machida M."/>
            <person name="Hall N."/>
            <person name="Barrell B.G."/>
            <person name="Denning D.W."/>
        </authorList>
    </citation>
    <scope>NUCLEOTIDE SEQUENCE [LARGE SCALE GENOMIC DNA]</scope>
    <source>
        <strain>ATCC MYA-4609 / CBS 101355 / FGSC A1100 / Af293</strain>
    </source>
</reference>
<proteinExistence type="inferred from homology"/>
<accession>Q4WKV8</accession>
<dbReference type="EC" id="4.2.2.2"/>
<dbReference type="EMBL" id="AAHF01000007">
    <property type="protein sequence ID" value="EAL87824.1"/>
    <property type="molecule type" value="Genomic_DNA"/>
</dbReference>
<dbReference type="RefSeq" id="XP_749862.1">
    <property type="nucleotide sequence ID" value="XM_744769.1"/>
</dbReference>
<dbReference type="SMR" id="Q4WKV8"/>
<dbReference type="STRING" id="330879.Q4WKV8"/>
<dbReference type="EnsemblFungi" id="EAL87824">
    <property type="protein sequence ID" value="EAL87824"/>
    <property type="gene ID" value="AFUA_1G01120"/>
</dbReference>
<dbReference type="GeneID" id="3507366"/>
<dbReference type="KEGG" id="afm:AFUA_1G01120"/>
<dbReference type="VEuPathDB" id="FungiDB:Afu1g01120"/>
<dbReference type="eggNOG" id="ENOG502QSM3">
    <property type="taxonomic scope" value="Eukaryota"/>
</dbReference>
<dbReference type="HOGENOM" id="CLU_044863_3_1_1"/>
<dbReference type="InParanoid" id="Q4WKV8"/>
<dbReference type="OMA" id="DADHPCV"/>
<dbReference type="OrthoDB" id="441042at2759"/>
<dbReference type="Proteomes" id="UP000002530">
    <property type="component" value="Chromosome 1"/>
</dbReference>
<dbReference type="GO" id="GO:0005576">
    <property type="term" value="C:extracellular region"/>
    <property type="evidence" value="ECO:0007669"/>
    <property type="project" value="UniProtKB-SubCell"/>
</dbReference>
<dbReference type="GO" id="GO:0030570">
    <property type="term" value="F:pectate lyase activity"/>
    <property type="evidence" value="ECO:0007669"/>
    <property type="project" value="UniProtKB-EC"/>
</dbReference>
<dbReference type="GO" id="GO:0071555">
    <property type="term" value="P:cell wall organization"/>
    <property type="evidence" value="ECO:0007669"/>
    <property type="project" value="UniProtKB-KW"/>
</dbReference>
<dbReference type="GO" id="GO:0045490">
    <property type="term" value="P:pectin catabolic process"/>
    <property type="evidence" value="ECO:0000318"/>
    <property type="project" value="GO_Central"/>
</dbReference>
<dbReference type="Gene3D" id="2.160.20.10">
    <property type="entry name" value="Single-stranded right-handed beta-helix, Pectin lyase-like"/>
    <property type="match status" value="1"/>
</dbReference>
<dbReference type="InterPro" id="IPR004898">
    <property type="entry name" value="Pectate_lyase_PlyH/PlyE-like"/>
</dbReference>
<dbReference type="InterPro" id="IPR012334">
    <property type="entry name" value="Pectin_lyas_fold"/>
</dbReference>
<dbReference type="InterPro" id="IPR011050">
    <property type="entry name" value="Pectin_lyase_fold/virulence"/>
</dbReference>
<dbReference type="PANTHER" id="PTHR33407">
    <property type="entry name" value="PECTATE LYASE F-RELATED"/>
    <property type="match status" value="1"/>
</dbReference>
<dbReference type="PANTHER" id="PTHR33407:SF9">
    <property type="entry name" value="PECTATE LYASE F-RELATED"/>
    <property type="match status" value="1"/>
</dbReference>
<dbReference type="Pfam" id="PF03211">
    <property type="entry name" value="Pectate_lyase"/>
    <property type="match status" value="1"/>
</dbReference>
<dbReference type="SUPFAM" id="SSF51126">
    <property type="entry name" value="Pectin lyase-like"/>
    <property type="match status" value="1"/>
</dbReference>
<comment type="function">
    <text evidence="1">Pectinolytic enzyme consist of four classes of enzymes: pectin lyase, polygalacturonase, pectin methylesterase and rhamnogalacturonase. Among pectinolytic enzymes, pectin lyase is the most important in depolymerization of pectin, since it cleaves internal glycosidic bonds of highly methylated pectins. Favors pectate, the anion, over pectin, the methyl ester (By similarity).</text>
</comment>
<comment type="catalytic activity">
    <reaction>
        <text>Eliminative cleavage of (1-&gt;4)-alpha-D-galacturonan to give oligosaccharides with 4-deoxy-alpha-D-galact-4-enuronosyl groups at their non-reducing ends.</text>
        <dbReference type="EC" id="4.2.2.2"/>
    </reaction>
</comment>
<comment type="cofactor">
    <cofactor evidence="1">
        <name>Ca(2+)</name>
        <dbReference type="ChEBI" id="CHEBI:29108"/>
    </cofactor>
    <text evidence="1">Binds 1 Ca(2+) ion per subunit.</text>
</comment>
<comment type="subcellular location">
    <subcellularLocation>
        <location evidence="1">Secreted</location>
    </subcellularLocation>
</comment>
<comment type="similarity">
    <text evidence="3">Belongs to the polysaccharide lyase 3 family.</text>
</comment>